<comment type="function">
    <text evidence="1">DNA-dependent RNA polymerase catalyzes the transcription of DNA into RNA using the four ribonucleoside triphosphates as substrates.</text>
</comment>
<comment type="catalytic activity">
    <reaction evidence="1">
        <text>RNA(n) + a ribonucleoside 5'-triphosphate = RNA(n+1) + diphosphate</text>
        <dbReference type="Rhea" id="RHEA:21248"/>
        <dbReference type="Rhea" id="RHEA-COMP:14527"/>
        <dbReference type="Rhea" id="RHEA-COMP:17342"/>
        <dbReference type="ChEBI" id="CHEBI:33019"/>
        <dbReference type="ChEBI" id="CHEBI:61557"/>
        <dbReference type="ChEBI" id="CHEBI:140395"/>
        <dbReference type="EC" id="2.7.7.6"/>
    </reaction>
</comment>
<comment type="subunit">
    <text evidence="1">Homodimer. The RNAP catalytic core consists of 2 alpha, 1 beta, 1 beta' and 1 omega subunit. When a sigma factor is associated with the core the holoenzyme is formed, which can initiate transcription.</text>
</comment>
<comment type="domain">
    <text evidence="1">The N-terminal domain is essential for RNAP assembly and basal transcription, whereas the C-terminal domain is involved in interaction with transcriptional regulators and with upstream promoter elements.</text>
</comment>
<comment type="similarity">
    <text evidence="1">Belongs to the RNA polymerase alpha chain family.</text>
</comment>
<name>RPOA_ANAPZ</name>
<protein>
    <recommendedName>
        <fullName evidence="1">DNA-directed RNA polymerase subunit alpha</fullName>
        <shortName evidence="1">RNAP subunit alpha</shortName>
        <ecNumber evidence="1">2.7.7.6</ecNumber>
    </recommendedName>
    <alternativeName>
        <fullName evidence="1">RNA polymerase subunit alpha</fullName>
    </alternativeName>
    <alternativeName>
        <fullName evidence="1">Transcriptase subunit alpha</fullName>
    </alternativeName>
</protein>
<keyword id="KW-0240">DNA-directed RNA polymerase</keyword>
<keyword id="KW-0548">Nucleotidyltransferase</keyword>
<keyword id="KW-0804">Transcription</keyword>
<keyword id="KW-0808">Transferase</keyword>
<organism>
    <name type="scientific">Anaplasma phagocytophilum (strain HZ)</name>
    <dbReference type="NCBI Taxonomy" id="212042"/>
    <lineage>
        <taxon>Bacteria</taxon>
        <taxon>Pseudomonadati</taxon>
        <taxon>Pseudomonadota</taxon>
        <taxon>Alphaproteobacteria</taxon>
        <taxon>Rickettsiales</taxon>
        <taxon>Anaplasmataceae</taxon>
        <taxon>Anaplasma</taxon>
        <taxon>phagocytophilum group</taxon>
    </lineage>
</organism>
<evidence type="ECO:0000255" key="1">
    <source>
        <dbReference type="HAMAP-Rule" id="MF_00059"/>
    </source>
</evidence>
<proteinExistence type="inferred from homology"/>
<dbReference type="EC" id="2.7.7.6" evidence="1"/>
<dbReference type="EMBL" id="CP000235">
    <property type="protein sequence ID" value="ABD43232.1"/>
    <property type="molecule type" value="Genomic_DNA"/>
</dbReference>
<dbReference type="SMR" id="Q2GL36"/>
<dbReference type="STRING" id="212042.APH_0303"/>
<dbReference type="PaxDb" id="212042-APH_0303"/>
<dbReference type="EnsemblBacteria" id="ABD43232">
    <property type="protein sequence ID" value="ABD43232"/>
    <property type="gene ID" value="APH_0303"/>
</dbReference>
<dbReference type="KEGG" id="aph:APH_0303"/>
<dbReference type="eggNOG" id="COG0202">
    <property type="taxonomic scope" value="Bacteria"/>
</dbReference>
<dbReference type="HOGENOM" id="CLU_053084_0_0_5"/>
<dbReference type="Proteomes" id="UP000001943">
    <property type="component" value="Chromosome"/>
</dbReference>
<dbReference type="GO" id="GO:0005737">
    <property type="term" value="C:cytoplasm"/>
    <property type="evidence" value="ECO:0007669"/>
    <property type="project" value="UniProtKB-ARBA"/>
</dbReference>
<dbReference type="GO" id="GO:0000428">
    <property type="term" value="C:DNA-directed RNA polymerase complex"/>
    <property type="evidence" value="ECO:0007669"/>
    <property type="project" value="UniProtKB-KW"/>
</dbReference>
<dbReference type="GO" id="GO:0003677">
    <property type="term" value="F:DNA binding"/>
    <property type="evidence" value="ECO:0007669"/>
    <property type="project" value="UniProtKB-UniRule"/>
</dbReference>
<dbReference type="GO" id="GO:0003899">
    <property type="term" value="F:DNA-directed RNA polymerase activity"/>
    <property type="evidence" value="ECO:0007669"/>
    <property type="project" value="UniProtKB-UniRule"/>
</dbReference>
<dbReference type="GO" id="GO:0046983">
    <property type="term" value="F:protein dimerization activity"/>
    <property type="evidence" value="ECO:0007669"/>
    <property type="project" value="InterPro"/>
</dbReference>
<dbReference type="GO" id="GO:0006351">
    <property type="term" value="P:DNA-templated transcription"/>
    <property type="evidence" value="ECO:0007669"/>
    <property type="project" value="UniProtKB-UniRule"/>
</dbReference>
<dbReference type="CDD" id="cd06928">
    <property type="entry name" value="RNAP_alpha_NTD"/>
    <property type="match status" value="1"/>
</dbReference>
<dbReference type="FunFam" id="1.10.150.20:FF:000001">
    <property type="entry name" value="DNA-directed RNA polymerase subunit alpha"/>
    <property type="match status" value="1"/>
</dbReference>
<dbReference type="FunFam" id="2.170.120.12:FF:000001">
    <property type="entry name" value="DNA-directed RNA polymerase subunit alpha"/>
    <property type="match status" value="1"/>
</dbReference>
<dbReference type="Gene3D" id="1.10.150.20">
    <property type="entry name" value="5' to 3' exonuclease, C-terminal subdomain"/>
    <property type="match status" value="1"/>
</dbReference>
<dbReference type="Gene3D" id="2.170.120.12">
    <property type="entry name" value="DNA-directed RNA polymerase, insert domain"/>
    <property type="match status" value="1"/>
</dbReference>
<dbReference type="Gene3D" id="3.30.1360.10">
    <property type="entry name" value="RNA polymerase, RBP11-like subunit"/>
    <property type="match status" value="1"/>
</dbReference>
<dbReference type="HAMAP" id="MF_00059">
    <property type="entry name" value="RNApol_bact_RpoA"/>
    <property type="match status" value="1"/>
</dbReference>
<dbReference type="InterPro" id="IPR011262">
    <property type="entry name" value="DNA-dir_RNA_pol_insert"/>
</dbReference>
<dbReference type="InterPro" id="IPR011263">
    <property type="entry name" value="DNA-dir_RNA_pol_RpoA/D/Rpb3"/>
</dbReference>
<dbReference type="InterPro" id="IPR011773">
    <property type="entry name" value="DNA-dir_RpoA"/>
</dbReference>
<dbReference type="InterPro" id="IPR036603">
    <property type="entry name" value="RBP11-like"/>
</dbReference>
<dbReference type="InterPro" id="IPR011260">
    <property type="entry name" value="RNAP_asu_C"/>
</dbReference>
<dbReference type="InterPro" id="IPR036643">
    <property type="entry name" value="RNApol_insert_sf"/>
</dbReference>
<dbReference type="NCBIfam" id="NF003513">
    <property type="entry name" value="PRK05182.1-2"/>
    <property type="match status" value="1"/>
</dbReference>
<dbReference type="NCBIfam" id="NF003519">
    <property type="entry name" value="PRK05182.2-5"/>
    <property type="match status" value="1"/>
</dbReference>
<dbReference type="NCBIfam" id="TIGR02027">
    <property type="entry name" value="rpoA"/>
    <property type="match status" value="1"/>
</dbReference>
<dbReference type="Pfam" id="PF01000">
    <property type="entry name" value="RNA_pol_A_bac"/>
    <property type="match status" value="1"/>
</dbReference>
<dbReference type="Pfam" id="PF03118">
    <property type="entry name" value="RNA_pol_A_CTD"/>
    <property type="match status" value="1"/>
</dbReference>
<dbReference type="Pfam" id="PF01193">
    <property type="entry name" value="RNA_pol_L"/>
    <property type="match status" value="1"/>
</dbReference>
<dbReference type="SMART" id="SM00662">
    <property type="entry name" value="RPOLD"/>
    <property type="match status" value="1"/>
</dbReference>
<dbReference type="SUPFAM" id="SSF47789">
    <property type="entry name" value="C-terminal domain of RNA polymerase alpha subunit"/>
    <property type="match status" value="1"/>
</dbReference>
<dbReference type="SUPFAM" id="SSF56553">
    <property type="entry name" value="Insert subdomain of RNA polymerase alpha subunit"/>
    <property type="match status" value="1"/>
</dbReference>
<dbReference type="SUPFAM" id="SSF55257">
    <property type="entry name" value="RBP11-like subunits of RNA polymerase"/>
    <property type="match status" value="1"/>
</dbReference>
<feature type="chain" id="PRO_0000264481" description="DNA-directed RNA polymerase subunit alpha">
    <location>
        <begin position="1"/>
        <end position="344"/>
    </location>
</feature>
<feature type="region of interest" description="Alpha N-terminal domain (alpha-NTD)" evidence="1">
    <location>
        <begin position="1"/>
        <end position="239"/>
    </location>
</feature>
<feature type="region of interest" description="Alpha C-terminal domain (alpha-CTD)" evidence="1">
    <location>
        <begin position="254"/>
        <end position="344"/>
    </location>
</feature>
<reference key="1">
    <citation type="journal article" date="2006" name="PLoS Genet.">
        <title>Comparative genomics of emerging human ehrlichiosis agents.</title>
        <authorList>
            <person name="Dunning Hotopp J.C."/>
            <person name="Lin M."/>
            <person name="Madupu R."/>
            <person name="Crabtree J."/>
            <person name="Angiuoli S.V."/>
            <person name="Eisen J.A."/>
            <person name="Seshadri R."/>
            <person name="Ren Q."/>
            <person name="Wu M."/>
            <person name="Utterback T.R."/>
            <person name="Smith S."/>
            <person name="Lewis M."/>
            <person name="Khouri H."/>
            <person name="Zhang C."/>
            <person name="Niu H."/>
            <person name="Lin Q."/>
            <person name="Ohashi N."/>
            <person name="Zhi N."/>
            <person name="Nelson W.C."/>
            <person name="Brinkac L.M."/>
            <person name="Dodson R.J."/>
            <person name="Rosovitz M.J."/>
            <person name="Sundaram J.P."/>
            <person name="Daugherty S.C."/>
            <person name="Davidsen T."/>
            <person name="Durkin A.S."/>
            <person name="Gwinn M.L."/>
            <person name="Haft D.H."/>
            <person name="Selengut J.D."/>
            <person name="Sullivan S.A."/>
            <person name="Zafar N."/>
            <person name="Zhou L."/>
            <person name="Benahmed F."/>
            <person name="Forberger H."/>
            <person name="Halpin R."/>
            <person name="Mulligan S."/>
            <person name="Robinson J."/>
            <person name="White O."/>
            <person name="Rikihisa Y."/>
            <person name="Tettelin H."/>
        </authorList>
    </citation>
    <scope>NUCLEOTIDE SEQUENCE [LARGE SCALE GENOMIC DNA]</scope>
    <source>
        <strain>HZ</strain>
    </source>
</reference>
<accession>Q2GL36</accession>
<gene>
    <name evidence="1" type="primary">rpoA</name>
    <name type="ordered locus">APH_0303</name>
</gene>
<sequence>MADHWNKLTRPSSIKVVGGKEPCVMELVIEPLESGFALTLGNALRRVMMSSLRGFAVYGIEIEGASHELTALSGVREDVADLVLNLSMLRVKLLNSNQRVLRLVARGPGEVTAASIVDSADHVVLNKDLHICTLGKDVDFCMKIYVNSGKGYVPATEYRAASRSGGASEVGSGFIATNALYSPVKKVALKIESSRIGQFTDYDRLMLTVETDGSVAPDDAVAVAAKILQDQLQSFISFDEVEETRKSVDKEEGVLPYDHNLLRKVDELELSVRSHNCLKNDNITYIGDLVQRTESDMLRTPNFGRKSLNEINEVLASMNLHLGMKVPNWPPESIENLSKQYSED</sequence>